<name>GUC2C_PIG</name>
<evidence type="ECO:0000250" key="1">
    <source>
        <dbReference type="UniProtKB" id="P25092"/>
    </source>
</evidence>
<evidence type="ECO:0000255" key="2"/>
<evidence type="ECO:0000255" key="3">
    <source>
        <dbReference type="PROSITE-ProRule" id="PRU00099"/>
    </source>
</evidence>
<evidence type="ECO:0000255" key="4">
    <source>
        <dbReference type="PROSITE-ProRule" id="PRU00159"/>
    </source>
</evidence>
<evidence type="ECO:0000305" key="5"/>
<keyword id="KW-1003">Cell membrane</keyword>
<keyword id="KW-0141">cGMP biosynthesis</keyword>
<keyword id="KW-0256">Endoplasmic reticulum</keyword>
<keyword id="KW-0325">Glycoprotein</keyword>
<keyword id="KW-0342">GTP-binding</keyword>
<keyword id="KW-0456">Lyase</keyword>
<keyword id="KW-0472">Membrane</keyword>
<keyword id="KW-0547">Nucleotide-binding</keyword>
<keyword id="KW-0675">Receptor</keyword>
<keyword id="KW-1185">Reference proteome</keyword>
<keyword id="KW-0732">Signal</keyword>
<keyword id="KW-0812">Transmembrane</keyword>
<keyword id="KW-1133">Transmembrane helix</keyword>
<dbReference type="EC" id="4.6.1.2" evidence="1"/>
<dbReference type="EMBL" id="D17513">
    <property type="protein sequence ID" value="BAA04465.1"/>
    <property type="molecule type" value="mRNA"/>
</dbReference>
<dbReference type="RefSeq" id="NP_999270.1">
    <property type="nucleotide sequence ID" value="NM_214105.1"/>
</dbReference>
<dbReference type="SMR" id="P55204"/>
<dbReference type="FunCoup" id="P55204">
    <property type="interactions" value="113"/>
</dbReference>
<dbReference type="STRING" id="9823.ENSSSCP00000051408"/>
<dbReference type="GlyCosmos" id="P55204">
    <property type="glycosylation" value="7 sites, No reported glycans"/>
</dbReference>
<dbReference type="GlyGen" id="P55204">
    <property type="glycosylation" value="7 sites"/>
</dbReference>
<dbReference type="iPTMnet" id="P55204"/>
<dbReference type="PaxDb" id="9823-ENSSSCP00000024152"/>
<dbReference type="PeptideAtlas" id="P55204"/>
<dbReference type="Ensembl" id="ENSSSCT00000042247.2">
    <property type="protein sequence ID" value="ENSSSCP00000037539.2"/>
    <property type="gene ID" value="ENSSSCG00000026724.4"/>
</dbReference>
<dbReference type="Ensembl" id="ENSSSCT00025063019.1">
    <property type="protein sequence ID" value="ENSSSCP00025026816.1"/>
    <property type="gene ID" value="ENSSSCG00025046365.1"/>
</dbReference>
<dbReference type="Ensembl" id="ENSSSCT00035061423.1">
    <property type="protein sequence ID" value="ENSSSCP00035024761.1"/>
    <property type="gene ID" value="ENSSSCG00035046191.1"/>
</dbReference>
<dbReference type="Ensembl" id="ENSSSCT00040078365.1">
    <property type="protein sequence ID" value="ENSSSCP00040033792.1"/>
    <property type="gene ID" value="ENSSSCG00040057669.1"/>
</dbReference>
<dbReference type="Ensembl" id="ENSSSCT00045035453.1">
    <property type="protein sequence ID" value="ENSSSCP00045024621.1"/>
    <property type="gene ID" value="ENSSSCG00045020756.1"/>
</dbReference>
<dbReference type="Ensembl" id="ENSSSCT00050057385.1">
    <property type="protein sequence ID" value="ENSSSCP00050024516.1"/>
    <property type="gene ID" value="ENSSSCG00050042236.1"/>
</dbReference>
<dbReference type="Ensembl" id="ENSSSCT00055027347.1">
    <property type="protein sequence ID" value="ENSSSCP00055021755.1"/>
    <property type="gene ID" value="ENSSSCG00055013873.1"/>
</dbReference>
<dbReference type="Ensembl" id="ENSSSCT00065106523.1">
    <property type="protein sequence ID" value="ENSSSCP00065047383.1"/>
    <property type="gene ID" value="ENSSSCG00065077037.1"/>
</dbReference>
<dbReference type="Ensembl" id="ENSSSCT00070044459.1">
    <property type="protein sequence ID" value="ENSSSCP00070037460.1"/>
    <property type="gene ID" value="ENSSSCG00070022312.1"/>
</dbReference>
<dbReference type="Ensembl" id="ENSSSCT00085010072">
    <property type="protein sequence ID" value="ENSSSCP00085007231"/>
    <property type="gene ID" value="ENSSSCG00085005373"/>
</dbReference>
<dbReference type="Ensembl" id="ENSSSCT00105015412">
    <property type="protein sequence ID" value="ENSSSCP00105011102"/>
    <property type="gene ID" value="ENSSSCG00105007691"/>
</dbReference>
<dbReference type="Ensembl" id="ENSSSCT00110024116">
    <property type="protein sequence ID" value="ENSSSCP00110016335"/>
    <property type="gene ID" value="ENSSSCG00110012584"/>
</dbReference>
<dbReference type="Ensembl" id="ENSSSCT00115006239">
    <property type="protein sequence ID" value="ENSSSCP00115005829"/>
    <property type="gene ID" value="ENSSSCG00115003660"/>
</dbReference>
<dbReference type="Ensembl" id="ENSSSCT00130039078">
    <property type="protein sequence ID" value="ENSSSCP00130027495"/>
    <property type="gene ID" value="ENSSSCG00130020150"/>
</dbReference>
<dbReference type="GeneID" id="397193"/>
<dbReference type="KEGG" id="ssc:397193"/>
<dbReference type="CTD" id="2984"/>
<dbReference type="VGNC" id="VGNC:111750">
    <property type="gene designation" value="GUCY2C"/>
</dbReference>
<dbReference type="eggNOG" id="KOG1023">
    <property type="taxonomic scope" value="Eukaryota"/>
</dbReference>
<dbReference type="GeneTree" id="ENSGT00940000155955"/>
<dbReference type="InParanoid" id="P55204"/>
<dbReference type="OrthoDB" id="60033at2759"/>
<dbReference type="BRENDA" id="4.6.1.2">
    <property type="organism ID" value="6170"/>
</dbReference>
<dbReference type="Reactome" id="R-SSC-8935690">
    <property type="pathway name" value="Digestion"/>
</dbReference>
<dbReference type="Proteomes" id="UP000008227">
    <property type="component" value="Chromosome 5"/>
</dbReference>
<dbReference type="Proteomes" id="UP000314985">
    <property type="component" value="Chromosome 5"/>
</dbReference>
<dbReference type="Proteomes" id="UP000694570">
    <property type="component" value="Unplaced"/>
</dbReference>
<dbReference type="Proteomes" id="UP000694571">
    <property type="component" value="Unplaced"/>
</dbReference>
<dbReference type="Proteomes" id="UP000694720">
    <property type="component" value="Unplaced"/>
</dbReference>
<dbReference type="Proteomes" id="UP000694722">
    <property type="component" value="Unplaced"/>
</dbReference>
<dbReference type="Proteomes" id="UP000694723">
    <property type="component" value="Unplaced"/>
</dbReference>
<dbReference type="Proteomes" id="UP000694724">
    <property type="component" value="Unplaced"/>
</dbReference>
<dbReference type="Proteomes" id="UP000694725">
    <property type="component" value="Unplaced"/>
</dbReference>
<dbReference type="Proteomes" id="UP000694726">
    <property type="component" value="Unplaced"/>
</dbReference>
<dbReference type="Proteomes" id="UP000694727">
    <property type="component" value="Unplaced"/>
</dbReference>
<dbReference type="Proteomes" id="UP000694728">
    <property type="component" value="Unplaced"/>
</dbReference>
<dbReference type="Bgee" id="ENSSSCG00000026724">
    <property type="expression patterns" value="Expressed in ovary and 41 other cell types or tissues"/>
</dbReference>
<dbReference type="ExpressionAtlas" id="P55204">
    <property type="expression patterns" value="baseline and differential"/>
</dbReference>
<dbReference type="GO" id="GO:0005789">
    <property type="term" value="C:endoplasmic reticulum membrane"/>
    <property type="evidence" value="ECO:0007669"/>
    <property type="project" value="UniProtKB-SubCell"/>
</dbReference>
<dbReference type="GO" id="GO:0005886">
    <property type="term" value="C:plasma membrane"/>
    <property type="evidence" value="ECO:0000318"/>
    <property type="project" value="GO_Central"/>
</dbReference>
<dbReference type="GO" id="GO:0005524">
    <property type="term" value="F:ATP binding"/>
    <property type="evidence" value="ECO:0007669"/>
    <property type="project" value="InterPro"/>
</dbReference>
<dbReference type="GO" id="GO:0005525">
    <property type="term" value="F:GTP binding"/>
    <property type="evidence" value="ECO:0007669"/>
    <property type="project" value="UniProtKB-KW"/>
</dbReference>
<dbReference type="GO" id="GO:0004383">
    <property type="term" value="F:guanylate cyclase activity"/>
    <property type="evidence" value="ECO:0000318"/>
    <property type="project" value="GO_Central"/>
</dbReference>
<dbReference type="GO" id="GO:0001653">
    <property type="term" value="F:peptide receptor activity"/>
    <property type="evidence" value="ECO:0000318"/>
    <property type="project" value="GO_Central"/>
</dbReference>
<dbReference type="GO" id="GO:0004672">
    <property type="term" value="F:protein kinase activity"/>
    <property type="evidence" value="ECO:0007669"/>
    <property type="project" value="InterPro"/>
</dbReference>
<dbReference type="GO" id="GO:0006182">
    <property type="term" value="P:cGMP biosynthetic process"/>
    <property type="evidence" value="ECO:0000318"/>
    <property type="project" value="GO_Central"/>
</dbReference>
<dbReference type="GO" id="GO:0035556">
    <property type="term" value="P:intracellular signal transduction"/>
    <property type="evidence" value="ECO:0007669"/>
    <property type="project" value="InterPro"/>
</dbReference>
<dbReference type="GO" id="GO:0007168">
    <property type="term" value="P:receptor guanylyl cyclase signaling pathway"/>
    <property type="evidence" value="ECO:0000318"/>
    <property type="project" value="GO_Central"/>
</dbReference>
<dbReference type="CDD" id="cd07302">
    <property type="entry name" value="CHD"/>
    <property type="match status" value="1"/>
</dbReference>
<dbReference type="CDD" id="cd06369">
    <property type="entry name" value="PBP1_GC_C_enterotoxin_receptor"/>
    <property type="match status" value="1"/>
</dbReference>
<dbReference type="CDD" id="cd14044">
    <property type="entry name" value="PK_GC-C"/>
    <property type="match status" value="1"/>
</dbReference>
<dbReference type="FunFam" id="1.10.510.10:FF:000364">
    <property type="entry name" value="Guanylate cyclase"/>
    <property type="match status" value="1"/>
</dbReference>
<dbReference type="FunFam" id="3.30.70.1230:FF:000015">
    <property type="entry name" value="Guanylate cyclase"/>
    <property type="match status" value="1"/>
</dbReference>
<dbReference type="FunFam" id="3.40.50.2300:FF:000185">
    <property type="entry name" value="Guanylate cyclase"/>
    <property type="match status" value="1"/>
</dbReference>
<dbReference type="Gene3D" id="3.40.50.2300">
    <property type="match status" value="1"/>
</dbReference>
<dbReference type="Gene3D" id="3.30.70.1230">
    <property type="entry name" value="Nucleotide cyclase"/>
    <property type="match status" value="1"/>
</dbReference>
<dbReference type="Gene3D" id="1.10.510.10">
    <property type="entry name" value="Transferase(Phosphotransferase) domain 1"/>
    <property type="match status" value="1"/>
</dbReference>
<dbReference type="InterPro" id="IPR001054">
    <property type="entry name" value="A/G_cyclase"/>
</dbReference>
<dbReference type="InterPro" id="IPR018297">
    <property type="entry name" value="A/G_cyclase_CS"/>
</dbReference>
<dbReference type="InterPro" id="IPR001828">
    <property type="entry name" value="ANF_lig-bd_rcpt"/>
</dbReference>
<dbReference type="InterPro" id="IPR050401">
    <property type="entry name" value="Cyclic_nucleotide_synthase"/>
</dbReference>
<dbReference type="InterPro" id="IPR042822">
    <property type="entry name" value="GC-C_PK"/>
</dbReference>
<dbReference type="InterPro" id="IPR011009">
    <property type="entry name" value="Kinase-like_dom_sf"/>
</dbReference>
<dbReference type="InterPro" id="IPR029787">
    <property type="entry name" value="Nucleotide_cyclase"/>
</dbReference>
<dbReference type="InterPro" id="IPR028082">
    <property type="entry name" value="Peripla_BP_I"/>
</dbReference>
<dbReference type="InterPro" id="IPR000719">
    <property type="entry name" value="Prot_kinase_dom"/>
</dbReference>
<dbReference type="InterPro" id="IPR001245">
    <property type="entry name" value="Ser-Thr/Tyr_kinase_cat_dom"/>
</dbReference>
<dbReference type="PANTHER" id="PTHR11920">
    <property type="entry name" value="GUANYLYL CYCLASE"/>
    <property type="match status" value="1"/>
</dbReference>
<dbReference type="PANTHER" id="PTHR11920:SF347">
    <property type="entry name" value="GUANYLYL CYCLASE C"/>
    <property type="match status" value="1"/>
</dbReference>
<dbReference type="Pfam" id="PF01094">
    <property type="entry name" value="ANF_receptor"/>
    <property type="match status" value="1"/>
</dbReference>
<dbReference type="Pfam" id="PF00211">
    <property type="entry name" value="Guanylate_cyc"/>
    <property type="match status" value="1"/>
</dbReference>
<dbReference type="Pfam" id="PF07714">
    <property type="entry name" value="PK_Tyr_Ser-Thr"/>
    <property type="match status" value="1"/>
</dbReference>
<dbReference type="SMART" id="SM00044">
    <property type="entry name" value="CYCc"/>
    <property type="match status" value="1"/>
</dbReference>
<dbReference type="SUPFAM" id="SSF55073">
    <property type="entry name" value="Nucleotide cyclase"/>
    <property type="match status" value="1"/>
</dbReference>
<dbReference type="SUPFAM" id="SSF53822">
    <property type="entry name" value="Periplasmic binding protein-like I"/>
    <property type="match status" value="1"/>
</dbReference>
<dbReference type="SUPFAM" id="SSF56112">
    <property type="entry name" value="Protein kinase-like (PK-like)"/>
    <property type="match status" value="1"/>
</dbReference>
<dbReference type="PROSITE" id="PS00452">
    <property type="entry name" value="GUANYLATE_CYCLASE_1"/>
    <property type="match status" value="1"/>
</dbReference>
<dbReference type="PROSITE" id="PS50125">
    <property type="entry name" value="GUANYLATE_CYCLASE_2"/>
    <property type="match status" value="1"/>
</dbReference>
<dbReference type="PROSITE" id="PS50011">
    <property type="entry name" value="PROTEIN_KINASE_DOM"/>
    <property type="match status" value="1"/>
</dbReference>
<reference key="1">
    <citation type="journal article" date="1994" name="Microbiol. Immunol.">
        <title>Pig intestinal membrane-bound receptor (guanylyl cyclase) for heat-stable enterotoxin: cDNA cloning, functional expression, and characterization.</title>
        <authorList>
            <person name="Wada A."/>
            <person name="Hirayama T."/>
            <person name="Kitao S."/>
            <person name="Fujisawa J."/>
            <person name="Hidaka Y."/>
            <person name="Shimonishi Y."/>
        </authorList>
    </citation>
    <scope>NUCLEOTIDE SEQUENCE [MRNA]</scope>
    <source>
        <tissue>Small intestine</tissue>
    </source>
</reference>
<reference key="2">
    <citation type="submission" date="1996-06" db="EMBL/GenBank/DDBJ databases">
        <authorList>
            <person name="Wada A."/>
        </authorList>
    </citation>
    <scope>SEQUENCE REVISION TO 238 AND 509</scope>
</reference>
<organism>
    <name type="scientific">Sus scrofa</name>
    <name type="common">Pig</name>
    <dbReference type="NCBI Taxonomy" id="9823"/>
    <lineage>
        <taxon>Eukaryota</taxon>
        <taxon>Metazoa</taxon>
        <taxon>Chordata</taxon>
        <taxon>Craniata</taxon>
        <taxon>Vertebrata</taxon>
        <taxon>Euteleostomi</taxon>
        <taxon>Mammalia</taxon>
        <taxon>Eutheria</taxon>
        <taxon>Laurasiatheria</taxon>
        <taxon>Artiodactyla</taxon>
        <taxon>Suina</taxon>
        <taxon>Suidae</taxon>
        <taxon>Sus</taxon>
    </lineage>
</organism>
<sequence>MKTPLLALALWSLLLQLGLTFWPSSVSQNCHNGSYEISVLMMNNSAFPESLDNLKAVVNEGVNIVRQRLLEAGLTVTVNATFVYSEGVIYKSSDCRSSTCEGLDLLRTISSEKRMGCVLLGPSCTYSTFQMYLDTDLNYPMISAGSFGLSCDYKETLTRLMSPARKLMYFLVDFWKVNNFPFKPFSWNTAYVFKNSTESEDCFWYLNALEAGVSYFSQKLSFKEMLRGNEEFQNILMDQNRKSNVIIMCGAPETVHTLKGGRAVAEDTVIILVDLFNDHYFMDNVTAPDYMKNVLVLTLPPENSVSNSSFSKDLSLVKNDFTLAYMNGVLLFGHMLKIFLEKREDVTTSKFAHAFRNITFEGHMGPVTLDNCGDIDNTMFLLYTSVDTSKYKVLLTYDTRKNYTNPVDKSPTFIWKNHKLPNDIPGRGPQILMIAVFTLTGTIVLLLLIALLVLRKYKREYALRQKKWSHIPPENIFPLESNETNHVSLKIDDDRRRDTIQRLRQCKYDKKRVILKDLKHNDGNFTEKQKIELNKLLQIDYYNLTKFYGTVKLDSMIFGVIEYCERGSLREVLNDTISYPDGTFMDWEFKISVLYDIAKGMSYLHSSKTEVHGRLKSTNCVVDSRMVVKITDFGCNSILAPKKDLWTAPEHLRRASVSQKGDVYSYGIIAQEIILRRETFYTLSCRDQKEKIFRVENSNGVKPFRPDLFLETAEEKELEVYLLVKNCWEEDPEKRPDFKKIENTLAKIFGLFHDQKNESYMDTLIRRLQLYSRNLEHLVEERTQLYKAERDRADRLNFMLLPRLVVKSLKEKGIVEPELYEEVTIYFSDIVGFTTICKYSTPMEVVDMLNDIYKSFDHILDHHDVYKVETIGDAYMVASGLPKRNGNRHAIDIAKMALDILSFMGTFELEHLPGLPIWIRIGIHSGPCAAGVVGIKMPRYCLFGDTVNTASRMESTGLPLRIHVSGSTIAILKRTECQFLYEVRGETYLKGRGTETTYWLTGVKDQEYNLPTPPTAENQQRLQAEFVDMIASSLQKRQASGIKNRKPTRVASYKKGTLEYLQLNTTDNESTHF</sequence>
<gene>
    <name type="primary">GUCY2C</name>
    <name type="synonym">GUC2C</name>
</gene>
<accession>P55204</accession>
<accession>Q29050</accession>
<proteinExistence type="evidence at transcript level"/>
<comment type="function">
    <text evidence="1">Guanylyl cyclase that catalyzes synthesis of cyclic GMP (cGMP) from GTP.</text>
</comment>
<comment type="catalytic activity">
    <reaction evidence="1">
        <text>GTP = 3',5'-cyclic GMP + diphosphate</text>
        <dbReference type="Rhea" id="RHEA:13665"/>
        <dbReference type="ChEBI" id="CHEBI:33019"/>
        <dbReference type="ChEBI" id="CHEBI:37565"/>
        <dbReference type="ChEBI" id="CHEBI:57746"/>
        <dbReference type="EC" id="4.6.1.2"/>
    </reaction>
    <physiologicalReaction direction="left-to-right" evidence="1">
        <dbReference type="Rhea" id="RHEA:13666"/>
    </physiologicalReaction>
</comment>
<comment type="subunit">
    <text evidence="1">Homotrimer. Interacts via its C-terminal region with NHERF4. Interacts with the lectin chaperone VIP36.</text>
</comment>
<comment type="subcellular location">
    <subcellularLocation>
        <location evidence="1">Cell membrane</location>
        <topology evidence="1">Single-pass type I membrane protein</topology>
    </subcellularLocation>
    <subcellularLocation>
        <location evidence="1">Endoplasmic reticulum membrane</location>
        <topology evidence="1">Single-pass type I membrane protein</topology>
    </subcellularLocation>
    <text evidence="1">The 145 kDa plasma membrane form of GUCY2C contains sialic acid and galactose residues, while a differencially glycosylated 130 Kda form is a high mannose form that is resident in the endoplasmic reticulum and may serve as the precursor for the cell surface form.</text>
</comment>
<comment type="domain">
    <text evidence="5">The protein kinase domain is predicted to be catalytically inactive.</text>
</comment>
<comment type="PTM">
    <text evidence="1">Glycosylation at Asn-79 is required for interaction with VIP36 while glycosylation at Asn-402 modulates ligand-mediated GC-C activation.</text>
</comment>
<comment type="similarity">
    <text evidence="3">Belongs to the adenylyl cyclase class-4/guanylyl cyclase family.</text>
</comment>
<protein>
    <recommendedName>
        <fullName>Guanylyl cyclase C</fullName>
        <shortName>GC-C</shortName>
        <ecNumber evidence="1">4.6.1.2</ecNumber>
    </recommendedName>
    <alternativeName>
        <fullName>Heat-stable enterotoxin receptor</fullName>
        <shortName>STA receptor</shortName>
    </alternativeName>
    <alternativeName>
        <fullName>Intestinal guanylate cyclase</fullName>
    </alternativeName>
</protein>
<feature type="signal peptide" evidence="2">
    <location>
        <begin position="1"/>
        <end position="23"/>
    </location>
</feature>
<feature type="chain" id="PRO_0000012377" description="Guanylyl cyclase C">
    <location>
        <begin position="24"/>
        <end position="1073"/>
    </location>
</feature>
<feature type="topological domain" description="Extracellular" evidence="2">
    <location>
        <begin position="24"/>
        <end position="433"/>
    </location>
</feature>
<feature type="transmembrane region" description="Helical" evidence="2">
    <location>
        <begin position="434"/>
        <end position="454"/>
    </location>
</feature>
<feature type="topological domain" description="Cytoplasmic" evidence="2">
    <location>
        <begin position="455"/>
        <end position="1073"/>
    </location>
</feature>
<feature type="domain" description="Protein kinase" evidence="4">
    <location>
        <begin position="489"/>
        <end position="749"/>
    </location>
</feature>
<feature type="domain" description="Guanylate cyclase" evidence="3">
    <location>
        <begin position="824"/>
        <end position="954"/>
    </location>
</feature>
<feature type="glycosylation site" description="N-linked (GlcNAc...) asparagine" evidence="2">
    <location>
        <position position="32"/>
    </location>
</feature>
<feature type="glycosylation site" description="N-linked (GlcNAc...) asparagine" evidence="2">
    <location>
        <position position="43"/>
    </location>
</feature>
<feature type="glycosylation site" description="N-linked (GlcNAc...) asparagine" evidence="2">
    <location>
        <position position="79"/>
    </location>
</feature>
<feature type="glycosylation site" description="N-linked (GlcNAc...) asparagine" evidence="2">
    <location>
        <position position="195"/>
    </location>
</feature>
<feature type="glycosylation site" description="N-linked (GlcNAc...) asparagine" evidence="2">
    <location>
        <position position="284"/>
    </location>
</feature>
<feature type="glycosylation site" description="N-linked (GlcNAc...) asparagine" evidence="2">
    <location>
        <position position="307"/>
    </location>
</feature>
<feature type="glycosylation site" description="N-linked (GlcNAc...) asparagine" evidence="2">
    <location>
        <position position="402"/>
    </location>
</feature>